<organism>
    <name type="scientific">Oryza sativa subsp. japonica</name>
    <name type="common">Rice</name>
    <dbReference type="NCBI Taxonomy" id="39947"/>
    <lineage>
        <taxon>Eukaryota</taxon>
        <taxon>Viridiplantae</taxon>
        <taxon>Streptophyta</taxon>
        <taxon>Embryophyta</taxon>
        <taxon>Tracheophyta</taxon>
        <taxon>Spermatophyta</taxon>
        <taxon>Magnoliopsida</taxon>
        <taxon>Liliopsida</taxon>
        <taxon>Poales</taxon>
        <taxon>Poaceae</taxon>
        <taxon>BOP clade</taxon>
        <taxon>Oryzoideae</taxon>
        <taxon>Oryzeae</taxon>
        <taxon>Oryzinae</taxon>
        <taxon>Oryza</taxon>
        <taxon>Oryza sativa</taxon>
    </lineage>
</organism>
<keyword id="KW-0067">ATP-binding</keyword>
<keyword id="KW-0143">Chaperone</keyword>
<keyword id="KW-0150">Chloroplast</keyword>
<keyword id="KW-0547">Nucleotide-binding</keyword>
<keyword id="KW-0934">Plastid</keyword>
<keyword id="KW-1185">Reference proteome</keyword>
<keyword id="KW-0677">Repeat</keyword>
<keyword id="KW-0809">Transit peptide</keyword>
<accession>Q2QVG9</accession>
<accession>A0A0P0Y8B5</accession>
<comment type="function">
    <text evidence="1">Molecular chaperone that may interact with a ClpP-like protease involved in degradation of denatured proteins in the chloroplast.</text>
</comment>
<comment type="subcellular location">
    <subcellularLocation>
        <location evidence="5">Plastid</location>
        <location evidence="5">Chloroplast</location>
    </subcellularLocation>
</comment>
<comment type="similarity">
    <text evidence="5">Belongs to the ClpA/ClpB family. ClpC subfamily.</text>
</comment>
<comment type="sequence caution" evidence="5">
    <conflict type="frameshift">
        <sequence resource="EMBL" id="AK066153"/>
    </conflict>
</comment>
<proteinExistence type="evidence at transcript level"/>
<feature type="transit peptide" description="Chloroplast" evidence="2">
    <location>
        <begin position="1"/>
        <end position="54"/>
    </location>
</feature>
<feature type="chain" id="PRO_0000412580" description="Chaperone protein ClpC2, chloroplastic">
    <location>
        <begin position="55"/>
        <end position="919"/>
    </location>
</feature>
<feature type="domain" description="Clp R" evidence="4">
    <location>
        <begin position="89"/>
        <end position="231"/>
    </location>
</feature>
<feature type="domain" description="UVR" evidence="3">
    <location>
        <begin position="506"/>
        <end position="541"/>
    </location>
</feature>
<feature type="region of interest" description="Repeat 1" evidence="4">
    <location>
        <begin position="92"/>
        <end position="157"/>
    </location>
</feature>
<feature type="region of interest" description="Repeat 2" evidence="4">
    <location>
        <begin position="167"/>
        <end position="231"/>
    </location>
</feature>
<feature type="region of interest" description="I" evidence="1">
    <location>
        <begin position="252"/>
        <end position="499"/>
    </location>
</feature>
<feature type="region of interest" description="II" evidence="1">
    <location>
        <begin position="566"/>
        <end position="757"/>
    </location>
</feature>
<feature type="binding site" evidence="2">
    <location>
        <begin position="297"/>
        <end position="304"/>
    </location>
    <ligand>
        <name>ATP</name>
        <dbReference type="ChEBI" id="CHEBI:30616"/>
    </ligand>
</feature>
<feature type="binding site" evidence="2">
    <location>
        <begin position="640"/>
        <end position="647"/>
    </location>
    <ligand>
        <name>ATP</name>
        <dbReference type="ChEBI" id="CHEBI:30616"/>
    </ligand>
</feature>
<gene>
    <name type="primary">CLPC2</name>
    <name type="ordered locus">Os12g0230100</name>
    <name type="ordered locus">LOC_Os12g12850</name>
</gene>
<evidence type="ECO:0000250" key="1"/>
<evidence type="ECO:0000255" key="2"/>
<evidence type="ECO:0000255" key="3">
    <source>
        <dbReference type="PROSITE-ProRule" id="PRU00217"/>
    </source>
</evidence>
<evidence type="ECO:0000255" key="4">
    <source>
        <dbReference type="PROSITE-ProRule" id="PRU01251"/>
    </source>
</evidence>
<evidence type="ECO:0000305" key="5"/>
<name>CLPC2_ORYSJ</name>
<sequence length="919" mass="102017">MAGTLLQPVALGTTFAGRVSGQRWKSHGTRRPPSMLAMSLSRPVKMAAFVGLRSVHSFSVTPVTNFRSTVASYRSRRGRRARFVTRSMFERFTEKAIKVIMLAQEEARRLGHNFVGTEQILLGLIGEGTGIAAKVLKSMGINLKDARVEVEKIIGRGNGFVAVEIPFTPRAKRVLELSLEEARQLGHNYIGSEHLLLGLLREGEGVAARVLESLGADPSNIRTQVIRMIGETTEAVGAGVGGGSSGNKMPTLEEYGTNLTKLAEEGKLDPVVGRQPQIERVVQILGRRTKNNPCLIGEPGVGKTAIAEGLAQRISTGDVPETIEGKKVITLDMGLLVAGTKYRGEFEERLKKLMEEIKQSDEIILFIDEVHTLIGAGAAEGAIDAANILKPALARGELQCIGATTLDEYRKHIEKDPALERRFQPVRVPEPTVDETIEILRGLRERYEIHHKLRYTDDALISAAKLSYQYISDRFLPDKAIDLIDEAGSRVRLRHAQVPEEARELDKELKQITKDKNEAVRSQDFEKAGELRDREMELKAQITALIDKSKEMSKAETESGETGPLVNEADIQHIVSSWTGIPVEKVSSDESDKLLKMEETLHQRVIGQDEAVKAISRSIRRARVGLKNPNRPIASFIFAGPTGVGKSELAKALAAYYFGSEEAMIRLDMSEFMERHTVSKLIGSPPGYVGYTEGGQLTEAVRRRPYTVVLFDEIEKAHPDVFNMMLQILEDGRLTDSKGRTVDFKNTLLIMTSNVGSSVIEKGGRKIGFDLDYDEKDSSYSRIKSLVVEEMKQYFRPEFLNRLDEMIVFRQLTKLEVKEIAEIMLKEVFDRLKAKDIDLQVTEKFKERIVDEGFNPSYGARPLRRAIMRLLEDSLAEKMLAGEVKEGDSAIVDVDSEGKVIVLNGQSGLPELSTPAVTV</sequence>
<reference key="1">
    <citation type="journal article" date="2005" name="BMC Biol.">
        <title>The sequence of rice chromosomes 11 and 12, rich in disease resistance genes and recent gene duplications.</title>
        <authorList>
            <consortium name="The rice chromosomes 11 and 12 sequencing consortia"/>
        </authorList>
    </citation>
    <scope>NUCLEOTIDE SEQUENCE [LARGE SCALE GENOMIC DNA]</scope>
    <source>
        <strain>cv. Nipponbare</strain>
    </source>
</reference>
<reference key="2">
    <citation type="journal article" date="2005" name="Nature">
        <title>The map-based sequence of the rice genome.</title>
        <authorList>
            <consortium name="International rice genome sequencing project (IRGSP)"/>
        </authorList>
    </citation>
    <scope>NUCLEOTIDE SEQUENCE [LARGE SCALE GENOMIC DNA]</scope>
    <source>
        <strain>cv. Nipponbare</strain>
    </source>
</reference>
<reference key="3">
    <citation type="journal article" date="2008" name="Nucleic Acids Res.">
        <title>The rice annotation project database (RAP-DB): 2008 update.</title>
        <authorList>
            <consortium name="The rice annotation project (RAP)"/>
        </authorList>
    </citation>
    <scope>GENOME REANNOTATION</scope>
    <source>
        <strain>cv. Nipponbare</strain>
    </source>
</reference>
<reference key="4">
    <citation type="journal article" date="2013" name="Rice">
        <title>Improvement of the Oryza sativa Nipponbare reference genome using next generation sequence and optical map data.</title>
        <authorList>
            <person name="Kawahara Y."/>
            <person name="de la Bastide M."/>
            <person name="Hamilton J.P."/>
            <person name="Kanamori H."/>
            <person name="McCombie W.R."/>
            <person name="Ouyang S."/>
            <person name="Schwartz D.C."/>
            <person name="Tanaka T."/>
            <person name="Wu J."/>
            <person name="Zhou S."/>
            <person name="Childs K.L."/>
            <person name="Davidson R.M."/>
            <person name="Lin H."/>
            <person name="Quesada-Ocampo L."/>
            <person name="Vaillancourt B."/>
            <person name="Sakai H."/>
            <person name="Lee S.S."/>
            <person name="Kim J."/>
            <person name="Numa H."/>
            <person name="Itoh T."/>
            <person name="Buell C.R."/>
            <person name="Matsumoto T."/>
        </authorList>
    </citation>
    <scope>GENOME REANNOTATION</scope>
    <source>
        <strain>cv. Nipponbare</strain>
    </source>
</reference>
<reference key="5">
    <citation type="journal article" date="2003" name="Science">
        <title>Collection, mapping, and annotation of over 28,000 cDNA clones from japonica rice.</title>
        <authorList>
            <consortium name="The rice full-length cDNA consortium"/>
        </authorList>
    </citation>
    <scope>NUCLEOTIDE SEQUENCE [LARGE SCALE MRNA]</scope>
    <source>
        <strain>cv. Nipponbare</strain>
    </source>
</reference>
<protein>
    <recommendedName>
        <fullName>Chaperone protein ClpC2, chloroplastic</fullName>
    </recommendedName>
    <alternativeName>
        <fullName>ATP-dependent Clp protease ATP-binding subunit ClpC homolog 2</fullName>
    </alternativeName>
    <alternativeName>
        <fullName>Casein lytic proteinase C2</fullName>
    </alternativeName>
</protein>
<dbReference type="EMBL" id="DP000011">
    <property type="protein sequence ID" value="ABA96309.2"/>
    <property type="molecule type" value="Genomic_DNA"/>
</dbReference>
<dbReference type="EMBL" id="DP000011">
    <property type="protein sequence ID" value="ABG21929.1"/>
    <property type="molecule type" value="Genomic_DNA"/>
</dbReference>
<dbReference type="EMBL" id="AP008218">
    <property type="protein sequence ID" value="BAF29461.1"/>
    <property type="molecule type" value="Genomic_DNA"/>
</dbReference>
<dbReference type="EMBL" id="AP014968">
    <property type="protein sequence ID" value="BAT16428.1"/>
    <property type="molecule type" value="Genomic_DNA"/>
</dbReference>
<dbReference type="EMBL" id="AK066153">
    <property type="status" value="NOT_ANNOTATED_CDS"/>
    <property type="molecule type" value="mRNA"/>
</dbReference>
<dbReference type="RefSeq" id="XP_015620084.1">
    <property type="nucleotide sequence ID" value="XM_015764598.1"/>
</dbReference>
<dbReference type="RefSeq" id="XP_015620085.1">
    <property type="nucleotide sequence ID" value="XM_015764599.1"/>
</dbReference>
<dbReference type="SMR" id="Q2QVG9"/>
<dbReference type="FunCoup" id="Q2QVG9">
    <property type="interactions" value="638"/>
</dbReference>
<dbReference type="STRING" id="39947.Q2QVG9"/>
<dbReference type="PaxDb" id="39947-Q2QVG9"/>
<dbReference type="EnsemblPlants" id="Os12t0230100-01">
    <property type="protein sequence ID" value="Os12t0230100-01"/>
    <property type="gene ID" value="Os12g0230100"/>
</dbReference>
<dbReference type="Gramene" id="Os12t0230100-01">
    <property type="protein sequence ID" value="Os12t0230100-01"/>
    <property type="gene ID" value="Os12g0230100"/>
</dbReference>
<dbReference type="KEGG" id="dosa:Os12g0230100"/>
<dbReference type="eggNOG" id="KOG1051">
    <property type="taxonomic scope" value="Eukaryota"/>
</dbReference>
<dbReference type="HOGENOM" id="CLU_005070_4_1_1"/>
<dbReference type="InParanoid" id="Q2QVG9"/>
<dbReference type="OMA" id="VDTIRWR"/>
<dbReference type="OrthoDB" id="47330at2759"/>
<dbReference type="Proteomes" id="UP000000763">
    <property type="component" value="Chromosome 12"/>
</dbReference>
<dbReference type="Proteomes" id="UP000059680">
    <property type="component" value="Chromosome 12"/>
</dbReference>
<dbReference type="GO" id="GO:0009507">
    <property type="term" value="C:chloroplast"/>
    <property type="evidence" value="ECO:0007669"/>
    <property type="project" value="UniProtKB-SubCell"/>
</dbReference>
<dbReference type="GO" id="GO:0005524">
    <property type="term" value="F:ATP binding"/>
    <property type="evidence" value="ECO:0007669"/>
    <property type="project" value="UniProtKB-KW"/>
</dbReference>
<dbReference type="GO" id="GO:0016887">
    <property type="term" value="F:ATP hydrolysis activity"/>
    <property type="evidence" value="ECO:0007669"/>
    <property type="project" value="InterPro"/>
</dbReference>
<dbReference type="CDD" id="cd00009">
    <property type="entry name" value="AAA"/>
    <property type="match status" value="1"/>
</dbReference>
<dbReference type="CDD" id="cd19499">
    <property type="entry name" value="RecA-like_ClpB_Hsp104-like"/>
    <property type="match status" value="1"/>
</dbReference>
<dbReference type="FunFam" id="1.10.8.60:FF:000017">
    <property type="entry name" value="ATP-dependent chaperone ClpB"/>
    <property type="match status" value="1"/>
</dbReference>
<dbReference type="FunFam" id="1.10.8.60:FF:000011">
    <property type="entry name" value="ATP-dependent Clp protease ATP-binding subunit"/>
    <property type="match status" value="1"/>
</dbReference>
<dbReference type="FunFam" id="1.10.1780.10:FF:000004">
    <property type="entry name" value="ATP-dependent Clp protease ATP-binding subunit ClpC"/>
    <property type="match status" value="1"/>
</dbReference>
<dbReference type="FunFam" id="3.40.50.300:FF:000025">
    <property type="entry name" value="ATP-dependent Clp protease subunit"/>
    <property type="match status" value="1"/>
</dbReference>
<dbReference type="FunFam" id="3.40.50.300:FF:000010">
    <property type="entry name" value="Chaperone clpB 1, putative"/>
    <property type="match status" value="1"/>
</dbReference>
<dbReference type="Gene3D" id="1.10.8.60">
    <property type="match status" value="2"/>
</dbReference>
<dbReference type="Gene3D" id="1.10.1780.10">
    <property type="entry name" value="Clp, N-terminal domain"/>
    <property type="match status" value="1"/>
</dbReference>
<dbReference type="Gene3D" id="3.40.50.300">
    <property type="entry name" value="P-loop containing nucleotide triphosphate hydrolases"/>
    <property type="match status" value="2"/>
</dbReference>
<dbReference type="Gene3D" id="4.10.860.10">
    <property type="entry name" value="UVR domain"/>
    <property type="match status" value="1"/>
</dbReference>
<dbReference type="InterPro" id="IPR003593">
    <property type="entry name" value="AAA+_ATPase"/>
</dbReference>
<dbReference type="InterPro" id="IPR003959">
    <property type="entry name" value="ATPase_AAA_core"/>
</dbReference>
<dbReference type="InterPro" id="IPR019489">
    <property type="entry name" value="Clp_ATPase_C"/>
</dbReference>
<dbReference type="InterPro" id="IPR036628">
    <property type="entry name" value="Clp_N_dom_sf"/>
</dbReference>
<dbReference type="InterPro" id="IPR004176">
    <property type="entry name" value="Clp_R_dom"/>
</dbReference>
<dbReference type="InterPro" id="IPR001270">
    <property type="entry name" value="ClpA/B"/>
</dbReference>
<dbReference type="InterPro" id="IPR018368">
    <property type="entry name" value="ClpA/B_CS1"/>
</dbReference>
<dbReference type="InterPro" id="IPR028299">
    <property type="entry name" value="ClpA/B_CS2"/>
</dbReference>
<dbReference type="InterPro" id="IPR041546">
    <property type="entry name" value="ClpA/ClpB_AAA_lid"/>
</dbReference>
<dbReference type="InterPro" id="IPR050130">
    <property type="entry name" value="ClpA_ClpB"/>
</dbReference>
<dbReference type="InterPro" id="IPR027417">
    <property type="entry name" value="P-loop_NTPase"/>
</dbReference>
<dbReference type="InterPro" id="IPR001943">
    <property type="entry name" value="UVR_dom"/>
</dbReference>
<dbReference type="PANTHER" id="PTHR11638">
    <property type="entry name" value="ATP-DEPENDENT CLP PROTEASE"/>
    <property type="match status" value="1"/>
</dbReference>
<dbReference type="PANTHER" id="PTHR11638:SF155">
    <property type="entry name" value="CHAPERONE PROTEIN CLPC1, CHLOROPLASTIC-LIKE"/>
    <property type="match status" value="1"/>
</dbReference>
<dbReference type="Pfam" id="PF00004">
    <property type="entry name" value="AAA"/>
    <property type="match status" value="1"/>
</dbReference>
<dbReference type="Pfam" id="PF07724">
    <property type="entry name" value="AAA_2"/>
    <property type="match status" value="1"/>
</dbReference>
<dbReference type="Pfam" id="PF17871">
    <property type="entry name" value="AAA_lid_9"/>
    <property type="match status" value="1"/>
</dbReference>
<dbReference type="Pfam" id="PF02861">
    <property type="entry name" value="Clp_N"/>
    <property type="match status" value="2"/>
</dbReference>
<dbReference type="Pfam" id="PF10431">
    <property type="entry name" value="ClpB_D2-small"/>
    <property type="match status" value="1"/>
</dbReference>
<dbReference type="PRINTS" id="PR00300">
    <property type="entry name" value="CLPPROTEASEA"/>
</dbReference>
<dbReference type="SMART" id="SM00382">
    <property type="entry name" value="AAA"/>
    <property type="match status" value="2"/>
</dbReference>
<dbReference type="SMART" id="SM01086">
    <property type="entry name" value="ClpB_D2-small"/>
    <property type="match status" value="1"/>
</dbReference>
<dbReference type="SUPFAM" id="SSF81923">
    <property type="entry name" value="Double Clp-N motif"/>
    <property type="match status" value="1"/>
</dbReference>
<dbReference type="SUPFAM" id="SSF52540">
    <property type="entry name" value="P-loop containing nucleoside triphosphate hydrolases"/>
    <property type="match status" value="2"/>
</dbReference>
<dbReference type="PROSITE" id="PS51903">
    <property type="entry name" value="CLP_R"/>
    <property type="match status" value="1"/>
</dbReference>
<dbReference type="PROSITE" id="PS00870">
    <property type="entry name" value="CLPAB_1"/>
    <property type="match status" value="1"/>
</dbReference>
<dbReference type="PROSITE" id="PS00871">
    <property type="entry name" value="CLPAB_2"/>
    <property type="match status" value="1"/>
</dbReference>
<dbReference type="PROSITE" id="PS50151">
    <property type="entry name" value="UVR"/>
    <property type="match status" value="1"/>
</dbReference>